<feature type="chain" id="PRO_0000233502" description="Small ribosomal subunit protein uS17">
    <location>
        <begin position="1"/>
        <end position="79"/>
    </location>
</feature>
<name>RS17_PARM1</name>
<keyword id="KW-0687">Ribonucleoprotein</keyword>
<keyword id="KW-0689">Ribosomal protein</keyword>
<keyword id="KW-0694">RNA-binding</keyword>
<keyword id="KW-0699">rRNA-binding</keyword>
<comment type="function">
    <text evidence="1">One of the primary rRNA binding proteins, it binds specifically to the 5'-end of 16S ribosomal RNA.</text>
</comment>
<comment type="subunit">
    <text evidence="1">Part of the 30S ribosomal subunit.</text>
</comment>
<comment type="similarity">
    <text evidence="1">Belongs to the universal ribosomal protein uS17 family.</text>
</comment>
<reference key="1">
    <citation type="journal article" date="2005" name="DNA Res.">
        <title>Complete genome sequence of the facultative anaerobic magnetotactic bacterium Magnetospirillum sp. strain AMB-1.</title>
        <authorList>
            <person name="Matsunaga T."/>
            <person name="Okamura Y."/>
            <person name="Fukuda Y."/>
            <person name="Wahyudi A.T."/>
            <person name="Murase Y."/>
            <person name="Takeyama H."/>
        </authorList>
    </citation>
    <scope>NUCLEOTIDE SEQUENCE [LARGE SCALE GENOMIC DNA]</scope>
    <source>
        <strain>ATCC 700264 / AMB-1</strain>
    </source>
</reference>
<dbReference type="EMBL" id="AP007255">
    <property type="protein sequence ID" value="BAE51925.1"/>
    <property type="molecule type" value="Genomic_DNA"/>
</dbReference>
<dbReference type="RefSeq" id="WP_009868558.1">
    <property type="nucleotide sequence ID" value="NC_007626.1"/>
</dbReference>
<dbReference type="SMR" id="Q2W2K0"/>
<dbReference type="STRING" id="342108.amb3121"/>
<dbReference type="KEGG" id="mag:amb3121"/>
<dbReference type="HOGENOM" id="CLU_073626_1_1_5"/>
<dbReference type="OrthoDB" id="9811714at2"/>
<dbReference type="Proteomes" id="UP000007058">
    <property type="component" value="Chromosome"/>
</dbReference>
<dbReference type="GO" id="GO:0022627">
    <property type="term" value="C:cytosolic small ribosomal subunit"/>
    <property type="evidence" value="ECO:0007669"/>
    <property type="project" value="TreeGrafter"/>
</dbReference>
<dbReference type="GO" id="GO:0019843">
    <property type="term" value="F:rRNA binding"/>
    <property type="evidence" value="ECO:0007669"/>
    <property type="project" value="UniProtKB-UniRule"/>
</dbReference>
<dbReference type="GO" id="GO:0003735">
    <property type="term" value="F:structural constituent of ribosome"/>
    <property type="evidence" value="ECO:0007669"/>
    <property type="project" value="InterPro"/>
</dbReference>
<dbReference type="GO" id="GO:0006412">
    <property type="term" value="P:translation"/>
    <property type="evidence" value="ECO:0007669"/>
    <property type="project" value="UniProtKB-UniRule"/>
</dbReference>
<dbReference type="CDD" id="cd00364">
    <property type="entry name" value="Ribosomal_uS17"/>
    <property type="match status" value="1"/>
</dbReference>
<dbReference type="Gene3D" id="2.40.50.140">
    <property type="entry name" value="Nucleic acid-binding proteins"/>
    <property type="match status" value="1"/>
</dbReference>
<dbReference type="HAMAP" id="MF_01345_B">
    <property type="entry name" value="Ribosomal_uS17_B"/>
    <property type="match status" value="1"/>
</dbReference>
<dbReference type="InterPro" id="IPR012340">
    <property type="entry name" value="NA-bd_OB-fold"/>
</dbReference>
<dbReference type="InterPro" id="IPR000266">
    <property type="entry name" value="Ribosomal_uS17"/>
</dbReference>
<dbReference type="InterPro" id="IPR019984">
    <property type="entry name" value="Ribosomal_uS17_bact/chlr"/>
</dbReference>
<dbReference type="NCBIfam" id="NF004123">
    <property type="entry name" value="PRK05610.1"/>
    <property type="match status" value="1"/>
</dbReference>
<dbReference type="NCBIfam" id="TIGR03635">
    <property type="entry name" value="uS17_bact"/>
    <property type="match status" value="1"/>
</dbReference>
<dbReference type="PANTHER" id="PTHR10744">
    <property type="entry name" value="40S RIBOSOMAL PROTEIN S11 FAMILY MEMBER"/>
    <property type="match status" value="1"/>
</dbReference>
<dbReference type="PANTHER" id="PTHR10744:SF1">
    <property type="entry name" value="SMALL RIBOSOMAL SUBUNIT PROTEIN US17M"/>
    <property type="match status" value="1"/>
</dbReference>
<dbReference type="Pfam" id="PF00366">
    <property type="entry name" value="Ribosomal_S17"/>
    <property type="match status" value="1"/>
</dbReference>
<dbReference type="PRINTS" id="PR00973">
    <property type="entry name" value="RIBOSOMALS17"/>
</dbReference>
<dbReference type="SUPFAM" id="SSF50249">
    <property type="entry name" value="Nucleic acid-binding proteins"/>
    <property type="match status" value="1"/>
</dbReference>
<organism>
    <name type="scientific">Paramagnetospirillum magneticum (strain ATCC 700264 / AMB-1)</name>
    <name type="common">Magnetospirillum magneticum</name>
    <dbReference type="NCBI Taxonomy" id="342108"/>
    <lineage>
        <taxon>Bacteria</taxon>
        <taxon>Pseudomonadati</taxon>
        <taxon>Pseudomonadota</taxon>
        <taxon>Alphaproteobacteria</taxon>
        <taxon>Rhodospirillales</taxon>
        <taxon>Magnetospirillaceae</taxon>
        <taxon>Paramagnetospirillum</taxon>
    </lineage>
</organism>
<gene>
    <name evidence="1" type="primary">rpsQ</name>
    <name type="ordered locus">amb3121</name>
</gene>
<protein>
    <recommendedName>
        <fullName evidence="1">Small ribosomal subunit protein uS17</fullName>
    </recommendedName>
    <alternativeName>
        <fullName evidence="2">30S ribosomal protein S17</fullName>
    </alternativeName>
</protein>
<accession>Q2W2K0</accession>
<sequence length="79" mass="9294">MPKRILQGVVVSDKMEKTVVVSVERRVMHPIYKKFIRRSKKYHAHDENNVFKTGETIRIRECAPISKTKCWEVIVEPQA</sequence>
<evidence type="ECO:0000255" key="1">
    <source>
        <dbReference type="HAMAP-Rule" id="MF_01345"/>
    </source>
</evidence>
<evidence type="ECO:0000305" key="2"/>
<proteinExistence type="inferred from homology"/>